<dbReference type="EMBL" id="M30615">
    <property type="protein sequence ID" value="AAA34149.1"/>
    <property type="molecule type" value="Genomic_DNA"/>
</dbReference>
<dbReference type="EMBL" id="M30616">
    <property type="protein sequence ID" value="AAA34150.1"/>
    <property type="molecule type" value="Genomic_DNA"/>
</dbReference>
<dbReference type="STRING" id="4081.P14274"/>
<dbReference type="InParanoid" id="P14274"/>
<dbReference type="Proteomes" id="UP000004994">
    <property type="component" value="Unplaced"/>
</dbReference>
<dbReference type="ExpressionAtlas" id="P14274">
    <property type="expression patterns" value="baseline and differential"/>
</dbReference>
<dbReference type="GO" id="GO:0009535">
    <property type="term" value="C:chloroplast thylakoid membrane"/>
    <property type="evidence" value="ECO:0000318"/>
    <property type="project" value="GO_Central"/>
</dbReference>
<dbReference type="GO" id="GO:0009522">
    <property type="term" value="C:photosystem I"/>
    <property type="evidence" value="ECO:0007669"/>
    <property type="project" value="UniProtKB-KW"/>
</dbReference>
<dbReference type="GO" id="GO:0009523">
    <property type="term" value="C:photosystem II"/>
    <property type="evidence" value="ECO:0007669"/>
    <property type="project" value="UniProtKB-KW"/>
</dbReference>
<dbReference type="GO" id="GO:0016168">
    <property type="term" value="F:chlorophyll binding"/>
    <property type="evidence" value="ECO:0007669"/>
    <property type="project" value="UniProtKB-KW"/>
</dbReference>
<dbReference type="GO" id="GO:0046872">
    <property type="term" value="F:metal ion binding"/>
    <property type="evidence" value="ECO:0007669"/>
    <property type="project" value="UniProtKB-KW"/>
</dbReference>
<dbReference type="GO" id="GO:0009768">
    <property type="term" value="P:photosynthesis, light harvesting in photosystem I"/>
    <property type="evidence" value="ECO:0000318"/>
    <property type="project" value="GO_Central"/>
</dbReference>
<dbReference type="GO" id="GO:0009416">
    <property type="term" value="P:response to light stimulus"/>
    <property type="evidence" value="ECO:0000318"/>
    <property type="project" value="GO_Central"/>
</dbReference>
<dbReference type="FunFam" id="1.10.3460.10:FF:000013">
    <property type="entry name" value="Chlorophyll a-b binding protein 3A, chloroplastic"/>
    <property type="match status" value="1"/>
</dbReference>
<dbReference type="Gene3D" id="1.10.3460.10">
    <property type="entry name" value="Chlorophyll a/b binding protein domain"/>
    <property type="match status" value="1"/>
</dbReference>
<dbReference type="InterPro" id="IPR001344">
    <property type="entry name" value="Chloro_AB-bd_pln"/>
</dbReference>
<dbReference type="InterPro" id="IPR022796">
    <property type="entry name" value="Chloroa_b-bind"/>
</dbReference>
<dbReference type="PANTHER" id="PTHR21649">
    <property type="entry name" value="CHLOROPHYLL A/B BINDING PROTEIN"/>
    <property type="match status" value="1"/>
</dbReference>
<dbReference type="Pfam" id="PF00504">
    <property type="entry name" value="Chloroa_b-bind"/>
    <property type="match status" value="1"/>
</dbReference>
<dbReference type="SUPFAM" id="SSF103511">
    <property type="entry name" value="Chlorophyll a-b binding protein"/>
    <property type="match status" value="1"/>
</dbReference>
<protein>
    <recommendedName>
        <fullName>Chlorophyll a-b binding protein 1A, chloroplastic</fullName>
    </recommendedName>
    <alternativeName>
        <fullName>LHCII type I CAB-1A</fullName>
        <shortName>LHCP</shortName>
    </alternativeName>
</protein>
<comment type="function">
    <text>The light-harvesting complex (LHC) functions as a light receptor, it captures and delivers excitation energy to photosystems with which it is closely associated.</text>
</comment>
<comment type="cofactor">
    <text evidence="1">Binds at least 14 chlorophylls (8 Chl-a and 6 Chl-b) and carotenoids such as lutein and neoxanthin.</text>
</comment>
<comment type="subunit">
    <text>The LHC complex consists of chlorophyll a-b binding proteins.</text>
</comment>
<comment type="subcellular location">
    <subcellularLocation>
        <location>Plastid</location>
        <location>Chloroplast thylakoid membrane</location>
        <topology>Multi-pass membrane protein</topology>
    </subcellularLocation>
</comment>
<comment type="domain">
    <text>The N-terminus of the protein extends into the stroma where it is involved with adhesion of granal membranes and post-translational modifications; both are believed to mediate the distribution of excitation energy between photosystems I and II.</text>
</comment>
<comment type="PTM">
    <text evidence="1">Photoregulated by reversible phosphorylation of its threonine residues.</text>
</comment>
<comment type="similarity">
    <text evidence="5">Belongs to the light-harvesting chlorophyll a/b-binding (LHC) protein family.</text>
</comment>
<evidence type="ECO:0000250" key="1"/>
<evidence type="ECO:0000250" key="2">
    <source>
        <dbReference type="UniProtKB" id="P07371"/>
    </source>
</evidence>
<evidence type="ECO:0000250" key="3">
    <source>
        <dbReference type="UniProtKB" id="P12333"/>
    </source>
</evidence>
<evidence type="ECO:0000255" key="4"/>
<evidence type="ECO:0000305" key="5"/>
<keyword id="KW-0148">Chlorophyll</keyword>
<keyword id="KW-0150">Chloroplast</keyword>
<keyword id="KW-0157">Chromophore</keyword>
<keyword id="KW-0460">Magnesium</keyword>
<keyword id="KW-0472">Membrane</keyword>
<keyword id="KW-0479">Metal-binding</keyword>
<keyword id="KW-0597">Phosphoprotein</keyword>
<keyword id="KW-0602">Photosynthesis</keyword>
<keyword id="KW-0603">Photosystem I</keyword>
<keyword id="KW-0604">Photosystem II</keyword>
<keyword id="KW-0934">Plastid</keyword>
<keyword id="KW-1185">Reference proteome</keyword>
<keyword id="KW-0793">Thylakoid</keyword>
<keyword id="KW-0809">Transit peptide</keyword>
<keyword id="KW-0812">Transmembrane</keyword>
<keyword id="KW-1133">Transmembrane helix</keyword>
<name>CB2A_SOLLC</name>
<accession>P14274</accession>
<gene>
    <name type="primary">CAB1A</name>
</gene>
<sequence>MAAAAMALSSPSFAGQAVKLSPSASENSGNGRITMRKAVAKSAPSSSPWXXXXXXXXXXXXXXXXXXXXXXXXXXXXXXXXXXXXXXXXXXXXXXXXXXXXXXXXXXXXXXXXXXXXXXXXXXXXXXXXXXXXXXXXXXXXXXXXXXXXSLVHAQSILAIWACQVVLMGAVEGYRIAGGPLGEVVDPLYPGGSFDPLGLAEDPEAFAELKVKEIKNGRLAMFSMFGFFVQAIVTGKGPLENLADHLADPVNNNAWAFATNFVPGK</sequence>
<proteinExistence type="inferred from homology"/>
<organism>
    <name type="scientific">Solanum lycopersicum</name>
    <name type="common">Tomato</name>
    <name type="synonym">Lycopersicon esculentum</name>
    <dbReference type="NCBI Taxonomy" id="4081"/>
    <lineage>
        <taxon>Eukaryota</taxon>
        <taxon>Viridiplantae</taxon>
        <taxon>Streptophyta</taxon>
        <taxon>Embryophyta</taxon>
        <taxon>Tracheophyta</taxon>
        <taxon>Spermatophyta</taxon>
        <taxon>Magnoliopsida</taxon>
        <taxon>eudicotyledons</taxon>
        <taxon>Gunneridae</taxon>
        <taxon>Pentapetalae</taxon>
        <taxon>asterids</taxon>
        <taxon>lamiids</taxon>
        <taxon>Solanales</taxon>
        <taxon>Solanaceae</taxon>
        <taxon>Solanoideae</taxon>
        <taxon>Solaneae</taxon>
        <taxon>Solanum</taxon>
        <taxon>Solanum subgen. Lycopersicon</taxon>
    </lineage>
</organism>
<reference key="1">
    <citation type="journal article" date="1985" name="Gene">
        <title>Molecular characterization and genetic mapping of two clusters of genes encoding chlorophyll a/b-binding proteins in Lycopersicon esculentum (tomato).</title>
        <authorList>
            <person name="Pichersky E."/>
            <person name="Bernatzky R."/>
            <person name="Tanksley S.D."/>
            <person name="Breidenbach R.B."/>
            <person name="Kausch A.P."/>
            <person name="Cashmore A.R."/>
        </authorList>
    </citation>
    <scope>NUCLEOTIDE SEQUENCE [GENOMIC DNA]</scope>
    <source>
        <strain>cv. T6</strain>
    </source>
</reference>
<feature type="transit peptide" description="Chloroplast">
    <location>
        <begin position="1"/>
        <end position="34"/>
    </location>
</feature>
<feature type="chain" id="PRO_0000003662" description="Chlorophyll a-b binding protein 1A, chloroplastic">
    <location>
        <begin position="35"/>
        <end position="265"/>
    </location>
</feature>
<feature type="transmembrane region" description="Helical" evidence="4">
    <location>
        <begin position="151"/>
        <end position="171"/>
    </location>
</feature>
<feature type="transmembrane region" description="Helical" evidence="4">
    <location>
        <begin position="219"/>
        <end position="239"/>
    </location>
</feature>
<feature type="binding site" description="axial binding residue" evidence="3">
    <location>
        <position position="152"/>
    </location>
    <ligand>
        <name>chlorophyll b</name>
        <dbReference type="ChEBI" id="CHEBI:61721"/>
        <label>2</label>
    </ligand>
    <ligandPart>
        <name>Mg</name>
        <dbReference type="ChEBI" id="CHEBI:25107"/>
    </ligandPart>
</feature>
<feature type="binding site" evidence="1">
    <location>
        <position position="156"/>
    </location>
    <ligand>
        <name>chlorophyll b</name>
        <dbReference type="ChEBI" id="CHEBI:61721"/>
        <label>3</label>
    </ligand>
</feature>
<feature type="binding site" evidence="1">
    <location>
        <position position="164"/>
    </location>
    <ligand>
        <name>chlorophyll b</name>
        <dbReference type="ChEBI" id="CHEBI:61721"/>
        <label>4</label>
    </ligand>
</feature>
<feature type="binding site" evidence="2">
    <location>
        <position position="164"/>
    </location>
    <ligand>
        <name>chlorophyll b</name>
        <dbReference type="ChEBI" id="CHEBI:61721"/>
        <label>5</label>
    </ligand>
</feature>
<feature type="binding site" description="axial binding residue" evidence="3">
    <location>
        <position position="172"/>
    </location>
    <ligand>
        <name>chlorophyll b</name>
        <dbReference type="ChEBI" id="CHEBI:61721"/>
        <label>3</label>
    </ligand>
    <ligandPart>
        <name>Mg</name>
        <dbReference type="ChEBI" id="CHEBI:25107"/>
    </ligandPart>
</feature>
<feature type="binding site" evidence="1">
    <location>
        <position position="175"/>
    </location>
    <ligand>
        <name>chlorophyll b</name>
        <dbReference type="ChEBI" id="CHEBI:61721"/>
        <label>4</label>
    </ligand>
</feature>
<feature type="binding site" evidence="1">
    <location>
        <position position="181"/>
    </location>
    <ligand>
        <name>chlorophyll b</name>
        <dbReference type="ChEBI" id="CHEBI:61721"/>
        <label>2</label>
    </ligand>
</feature>
<feature type="binding site" evidence="1">
    <location>
        <position position="212"/>
    </location>
    <ligand>
        <name>chlorophyll a</name>
        <dbReference type="ChEBI" id="CHEBI:58416"/>
        <label>5</label>
    </ligand>
</feature>
<feature type="binding site" description="axial binding residue" evidence="3">
    <location>
        <position position="213"/>
    </location>
    <ligand>
        <name>chlorophyll a</name>
        <dbReference type="ChEBI" id="CHEBI:58416"/>
        <label>3</label>
    </ligand>
    <ligandPart>
        <name>Mg</name>
        <dbReference type="ChEBI" id="CHEBI:25107"/>
    </ligandPart>
</feature>
<feature type="binding site" description="axial binding residue" evidence="3">
    <location>
        <position position="216"/>
    </location>
    <ligand>
        <name>chlorophyll a</name>
        <dbReference type="ChEBI" id="CHEBI:58416"/>
        <label>4</label>
    </ligand>
    <ligandPart>
        <name>Mg</name>
        <dbReference type="ChEBI" id="CHEBI:25107"/>
    </ligandPart>
</feature>
<feature type="binding site" evidence="1">
    <location>
        <position position="218"/>
    </location>
    <ligand>
        <name>chlorophyll a</name>
        <dbReference type="ChEBI" id="CHEBI:58416"/>
        <label>1</label>
    </ligand>
</feature>
<feature type="binding site" description="axial binding residue" evidence="3">
    <location>
        <position position="230"/>
    </location>
    <ligand>
        <name>chlorophyll a</name>
        <dbReference type="ChEBI" id="CHEBI:58416"/>
        <label>5</label>
    </ligand>
    <ligandPart>
        <name>Mg</name>
        <dbReference type="ChEBI" id="CHEBI:25107"/>
    </ligandPart>
</feature>
<feature type="binding site" description="axial binding residue" evidence="3">
    <location>
        <position position="245"/>
    </location>
    <ligand>
        <name>chlorophyll a</name>
        <dbReference type="ChEBI" id="CHEBI:58416"/>
        <label>6</label>
    </ligand>
    <ligandPart>
        <name>Mg</name>
        <dbReference type="ChEBI" id="CHEBI:25107"/>
    </ligandPart>
</feature>
<feature type="binding site" evidence="1">
    <location>
        <position position="254"/>
    </location>
    <ligand>
        <name>chlorophyll a</name>
        <dbReference type="ChEBI" id="CHEBI:58416"/>
        <label>6</label>
    </ligand>
</feature>
<feature type="binding site" evidence="1">
    <location>
        <position position="261"/>
    </location>
    <ligand>
        <name>chlorophyll b</name>
        <dbReference type="ChEBI" id="CHEBI:61721"/>
        <label>5</label>
    </ligand>
</feature>